<proteinExistence type="inferred from homology"/>
<reference key="1">
    <citation type="journal article" date="2007" name="PLoS Genet.">
        <title>The complete genome sequence of Yersinia pseudotuberculosis IP31758, the causative agent of Far East scarlet-like fever.</title>
        <authorList>
            <person name="Eppinger M."/>
            <person name="Rosovitz M.J."/>
            <person name="Fricke W.F."/>
            <person name="Rasko D.A."/>
            <person name="Kokorina G."/>
            <person name="Fayolle C."/>
            <person name="Lindler L.E."/>
            <person name="Carniel E."/>
            <person name="Ravel J."/>
        </authorList>
    </citation>
    <scope>NUCLEOTIDE SEQUENCE [LARGE SCALE GENOMIC DNA]</scope>
    <source>
        <strain>IP 31758</strain>
    </source>
</reference>
<keyword id="KW-0326">Glycosidase</keyword>
<keyword id="KW-0378">Hydrolase</keyword>
<keyword id="KW-0460">Magnesium</keyword>
<keyword id="KW-0479">Metal-binding</keyword>
<keyword id="KW-0915">Sodium</keyword>
<evidence type="ECO:0000255" key="1">
    <source>
        <dbReference type="HAMAP-Rule" id="MF_01687"/>
    </source>
</evidence>
<accession>A7FH78</accession>
<organism>
    <name type="scientific">Yersinia pseudotuberculosis serotype O:1b (strain IP 31758)</name>
    <dbReference type="NCBI Taxonomy" id="349747"/>
    <lineage>
        <taxon>Bacteria</taxon>
        <taxon>Pseudomonadati</taxon>
        <taxon>Pseudomonadota</taxon>
        <taxon>Gammaproteobacteria</taxon>
        <taxon>Enterobacterales</taxon>
        <taxon>Yersiniaceae</taxon>
        <taxon>Yersinia</taxon>
    </lineage>
</organism>
<comment type="catalytic activity">
    <reaction evidence="1">
        <text>Hydrolysis of terminal non-reducing beta-D-galactose residues in beta-D-galactosides.</text>
        <dbReference type="EC" id="3.2.1.23"/>
    </reaction>
</comment>
<comment type="cofactor">
    <cofactor evidence="1">
        <name>Mg(2+)</name>
        <dbReference type="ChEBI" id="CHEBI:18420"/>
    </cofactor>
    <text evidence="1">Binds 2 magnesium ions per monomer.</text>
</comment>
<comment type="cofactor">
    <cofactor evidence="1">
        <name>Na(+)</name>
        <dbReference type="ChEBI" id="CHEBI:29101"/>
    </cofactor>
    <text evidence="1">Binds 1 sodium ion per monomer.</text>
</comment>
<comment type="subunit">
    <text evidence="1">Homotetramer.</text>
</comment>
<comment type="similarity">
    <text evidence="1">Belongs to the glycosyl hydrolase 2 family.</text>
</comment>
<dbReference type="EC" id="3.2.1.23" evidence="1"/>
<dbReference type="EMBL" id="CP000720">
    <property type="protein sequence ID" value="ABS47972.1"/>
    <property type="molecule type" value="Genomic_DNA"/>
</dbReference>
<dbReference type="RefSeq" id="WP_012104994.1">
    <property type="nucleotide sequence ID" value="NC_009708.1"/>
</dbReference>
<dbReference type="SMR" id="A7FH78"/>
<dbReference type="CAZy" id="GH2">
    <property type="family name" value="Glycoside Hydrolase Family 2"/>
</dbReference>
<dbReference type="KEGG" id="ypi:YpsIP31758_1629"/>
<dbReference type="HOGENOM" id="CLU_002346_0_2_6"/>
<dbReference type="Proteomes" id="UP000002412">
    <property type="component" value="Chromosome"/>
</dbReference>
<dbReference type="GO" id="GO:0009341">
    <property type="term" value="C:beta-galactosidase complex"/>
    <property type="evidence" value="ECO:0007669"/>
    <property type="project" value="InterPro"/>
</dbReference>
<dbReference type="GO" id="GO:0004565">
    <property type="term" value="F:beta-galactosidase activity"/>
    <property type="evidence" value="ECO:0007669"/>
    <property type="project" value="UniProtKB-EC"/>
</dbReference>
<dbReference type="GO" id="GO:0030246">
    <property type="term" value="F:carbohydrate binding"/>
    <property type="evidence" value="ECO:0007669"/>
    <property type="project" value="InterPro"/>
</dbReference>
<dbReference type="GO" id="GO:0000287">
    <property type="term" value="F:magnesium ion binding"/>
    <property type="evidence" value="ECO:0007669"/>
    <property type="project" value="UniProtKB-UniRule"/>
</dbReference>
<dbReference type="GO" id="GO:0005990">
    <property type="term" value="P:lactose catabolic process"/>
    <property type="evidence" value="ECO:0007669"/>
    <property type="project" value="TreeGrafter"/>
</dbReference>
<dbReference type="FunFam" id="2.60.120.260:FF:000058">
    <property type="entry name" value="Beta-galactosidase"/>
    <property type="match status" value="1"/>
</dbReference>
<dbReference type="FunFam" id="3.20.20.80:FF:000018">
    <property type="entry name" value="Beta-galactosidase"/>
    <property type="match status" value="1"/>
</dbReference>
<dbReference type="Gene3D" id="2.70.98.10">
    <property type="match status" value="1"/>
</dbReference>
<dbReference type="Gene3D" id="2.60.120.260">
    <property type="entry name" value="Galactose-binding domain-like"/>
    <property type="match status" value="1"/>
</dbReference>
<dbReference type="Gene3D" id="3.20.20.80">
    <property type="entry name" value="Glycosidases"/>
    <property type="match status" value="1"/>
</dbReference>
<dbReference type="Gene3D" id="2.60.40.10">
    <property type="entry name" value="Immunoglobulins"/>
    <property type="match status" value="2"/>
</dbReference>
<dbReference type="HAMAP" id="MF_01687">
    <property type="entry name" value="Beta_gal"/>
    <property type="match status" value="1"/>
</dbReference>
<dbReference type="InterPro" id="IPR004199">
    <property type="entry name" value="B-gal_small/dom_5"/>
</dbReference>
<dbReference type="InterPro" id="IPR050347">
    <property type="entry name" value="Bact_Beta-galactosidase"/>
</dbReference>
<dbReference type="InterPro" id="IPR036156">
    <property type="entry name" value="Beta-gal/glucu_dom_sf"/>
</dbReference>
<dbReference type="InterPro" id="IPR011013">
    <property type="entry name" value="Gal_mutarotase_sf_dom"/>
</dbReference>
<dbReference type="InterPro" id="IPR008979">
    <property type="entry name" value="Galactose-bd-like_sf"/>
</dbReference>
<dbReference type="InterPro" id="IPR014718">
    <property type="entry name" value="GH-type_carb-bd"/>
</dbReference>
<dbReference type="InterPro" id="IPR006101">
    <property type="entry name" value="Glyco_hydro_2"/>
</dbReference>
<dbReference type="InterPro" id="IPR023232">
    <property type="entry name" value="Glyco_hydro_2_AS"/>
</dbReference>
<dbReference type="InterPro" id="IPR023933">
    <property type="entry name" value="Glyco_hydro_2_beta_Galsidase"/>
</dbReference>
<dbReference type="InterPro" id="IPR006103">
    <property type="entry name" value="Glyco_hydro_2_cat"/>
</dbReference>
<dbReference type="InterPro" id="IPR023230">
    <property type="entry name" value="Glyco_hydro_2_CS"/>
</dbReference>
<dbReference type="InterPro" id="IPR006102">
    <property type="entry name" value="Glyco_hydro_2_Ig-like"/>
</dbReference>
<dbReference type="InterPro" id="IPR006104">
    <property type="entry name" value="Glyco_hydro_2_N"/>
</dbReference>
<dbReference type="InterPro" id="IPR017853">
    <property type="entry name" value="Glycoside_hydrolase_SF"/>
</dbReference>
<dbReference type="InterPro" id="IPR013783">
    <property type="entry name" value="Ig-like_fold"/>
</dbReference>
<dbReference type="InterPro" id="IPR032312">
    <property type="entry name" value="LacZ_4"/>
</dbReference>
<dbReference type="NCBIfam" id="NF007074">
    <property type="entry name" value="PRK09525.1"/>
    <property type="match status" value="1"/>
</dbReference>
<dbReference type="PANTHER" id="PTHR46323">
    <property type="entry name" value="BETA-GALACTOSIDASE"/>
    <property type="match status" value="1"/>
</dbReference>
<dbReference type="PANTHER" id="PTHR46323:SF2">
    <property type="entry name" value="BETA-GALACTOSIDASE"/>
    <property type="match status" value="1"/>
</dbReference>
<dbReference type="Pfam" id="PF02929">
    <property type="entry name" value="Bgal_small_N"/>
    <property type="match status" value="1"/>
</dbReference>
<dbReference type="Pfam" id="PF00703">
    <property type="entry name" value="Glyco_hydro_2"/>
    <property type="match status" value="1"/>
</dbReference>
<dbReference type="Pfam" id="PF02836">
    <property type="entry name" value="Glyco_hydro_2_C"/>
    <property type="match status" value="1"/>
</dbReference>
<dbReference type="Pfam" id="PF02837">
    <property type="entry name" value="Glyco_hydro_2_N"/>
    <property type="match status" value="1"/>
</dbReference>
<dbReference type="Pfam" id="PF16353">
    <property type="entry name" value="LacZ_4"/>
    <property type="match status" value="1"/>
</dbReference>
<dbReference type="PRINTS" id="PR00132">
    <property type="entry name" value="GLHYDRLASE2"/>
</dbReference>
<dbReference type="SMART" id="SM01038">
    <property type="entry name" value="Bgal_small_N"/>
    <property type="match status" value="1"/>
</dbReference>
<dbReference type="SUPFAM" id="SSF51445">
    <property type="entry name" value="(Trans)glycosidases"/>
    <property type="match status" value="1"/>
</dbReference>
<dbReference type="SUPFAM" id="SSF49303">
    <property type="entry name" value="beta-Galactosidase/glucuronidase domain"/>
    <property type="match status" value="2"/>
</dbReference>
<dbReference type="SUPFAM" id="SSF74650">
    <property type="entry name" value="Galactose mutarotase-like"/>
    <property type="match status" value="1"/>
</dbReference>
<dbReference type="SUPFAM" id="SSF49785">
    <property type="entry name" value="Galactose-binding domain-like"/>
    <property type="match status" value="1"/>
</dbReference>
<dbReference type="PROSITE" id="PS00719">
    <property type="entry name" value="GLYCOSYL_HYDROL_F2_1"/>
    <property type="match status" value="1"/>
</dbReference>
<dbReference type="PROSITE" id="PS00608">
    <property type="entry name" value="GLYCOSYL_HYDROL_F2_2"/>
    <property type="match status" value="1"/>
</dbReference>
<sequence>MTSQEKVPFQVQLSLPQILSRRDWENPQITQYHRLEAHPPFHSWRDVESAQKDRPSPQQQTLNGLWSFSYFTQPEAVPEHWVRCDLAEAKPLPVPANWQLHGYDAPIYTNIQYPIPVNPPRVPDLNPTGCYSRDFTLEPSWLASGKTRIIFDGVSSAFYLWCNGQWVGYSQDSRLPAEFDLTPYLQAGSNRIAVLVLRWSDGSYLEDQDMWRMSGIFRDVKLLHKPEIHLRDIHIMTHLSPEFTSANLEVMAAVNIPSLQLNDPQVTGSYQLRVQLWLADKLVASLQQPLGTQAIDERGPYTDRTQLVLRIDQPLLWSAEQPTLYRAVVSLLNHQQELIEAEAYDVGFRQVAIHQGLLKINGKAVLIRGVNRHEHHPQTGQAIDEESLLQDILLMKQHNFNAVRCSHYPNHPLWYRLCDRYGLYVVDEANIETHGMQPMSRLSDDPSWFSAFSERVTRMVQRDRNHPCIIIWSLGNESGHGATHDALYRWIKTNDPTRPVQYEGGGANTLATDILCPMYARVDEDQPFPAVPKWSIKKWVGLPNESRPLILCEYAHAMGNSFGGFARYWQAFRQYPRLQGGFIWDWVDQSLTHHNDHGQPYWAYGGDFGDTPNDRQFCMNGLVFPDRSPHPSLYEAQCAQQFFQFSLLSTTPLVINITSEYLFRESDNEQLYWRIMLEGESMLEGSQPLNLSPESSQCYRLAEKLPTLNKPGQLWLNVEIRQPKETPWSPAQHRSAWHQWRLPQPLFSPSSDLTNATAHYAPQLQHNLQLQHNRQLQHDLQLQQDEQHIKVTYQQQCWQFSRQTGRLAQWWVADKPMLLRPLQDQFVRAPLDNDIGISEATHIDPNAWVERWKKAGMYQLQQRCLSLHVDHLSHSVQISAEYGYEFEQEPLLHSHWVYRFDRHGRMTIDVNVRIATSLPAPARIGMCCQLADISPTVDWLGLGPHENYPDRQLAAQYGHWSLPLEQMHTAYIFPSENGLRCNTHTLNYGRWTLTGDFHFGISRYSTQQLMVTSHQHLLEPEEGTWLNIDGFHMGVGGDDSWSPSVHIDDILTRETYQYQICWQYKV</sequence>
<protein>
    <recommendedName>
        <fullName evidence="1">Beta-galactosidase</fullName>
        <shortName evidence="1">Beta-gal</shortName>
        <ecNumber evidence="1">3.2.1.23</ecNumber>
    </recommendedName>
    <alternativeName>
        <fullName evidence="1">Lactase</fullName>
    </alternativeName>
</protein>
<feature type="chain" id="PRO_0000367022" description="Beta-galactosidase">
    <location>
        <begin position="1"/>
        <end position="1066"/>
    </location>
</feature>
<feature type="active site" description="Proton donor" evidence="1">
    <location>
        <position position="477"/>
    </location>
</feature>
<feature type="active site" description="Nucleophile" evidence="1">
    <location>
        <position position="553"/>
    </location>
</feature>
<feature type="binding site" evidence="1">
    <location>
        <position position="110"/>
    </location>
    <ligand>
        <name>substrate</name>
    </ligand>
</feature>
<feature type="binding site" evidence="1">
    <location>
        <position position="209"/>
    </location>
    <ligand>
        <name>Na(+)</name>
        <dbReference type="ChEBI" id="CHEBI:29101"/>
    </ligand>
</feature>
<feature type="binding site" evidence="1">
    <location>
        <position position="209"/>
    </location>
    <ligand>
        <name>substrate</name>
    </ligand>
</feature>
<feature type="binding site" evidence="1">
    <location>
        <position position="432"/>
    </location>
    <ligand>
        <name>Mg(2+)</name>
        <dbReference type="ChEBI" id="CHEBI:18420"/>
        <label>1</label>
    </ligand>
</feature>
<feature type="binding site" evidence="1">
    <location>
        <position position="434"/>
    </location>
    <ligand>
        <name>Mg(2+)</name>
        <dbReference type="ChEBI" id="CHEBI:18420"/>
        <label>1</label>
    </ligand>
</feature>
<feature type="binding site" evidence="1">
    <location>
        <position position="477"/>
    </location>
    <ligand>
        <name>Mg(2+)</name>
        <dbReference type="ChEBI" id="CHEBI:18420"/>
        <label>1</label>
    </ligand>
</feature>
<feature type="binding site" evidence="1">
    <location>
        <position position="477"/>
    </location>
    <ligand>
        <name>substrate</name>
    </ligand>
</feature>
<feature type="binding site" evidence="1">
    <location>
        <begin position="553"/>
        <end position="556"/>
    </location>
    <ligand>
        <name>substrate</name>
    </ligand>
</feature>
<feature type="binding site" evidence="1">
    <location>
        <position position="613"/>
    </location>
    <ligand>
        <name>Mg(2+)</name>
        <dbReference type="ChEBI" id="CHEBI:18420"/>
        <label>2</label>
    </ligand>
</feature>
<feature type="binding site" evidence="1">
    <location>
        <position position="617"/>
    </location>
    <ligand>
        <name>Na(+)</name>
        <dbReference type="ChEBI" id="CHEBI:29101"/>
    </ligand>
</feature>
<feature type="binding site" evidence="1">
    <location>
        <position position="620"/>
    </location>
    <ligand>
        <name>Na(+)</name>
        <dbReference type="ChEBI" id="CHEBI:29101"/>
    </ligand>
</feature>
<feature type="binding site" evidence="1">
    <location>
        <position position="620"/>
    </location>
    <ligand>
        <name>substrate</name>
    </ligand>
</feature>
<feature type="binding site" evidence="1">
    <location>
        <position position="1041"/>
    </location>
    <ligand>
        <name>substrate</name>
    </ligand>
</feature>
<feature type="site" description="Transition state stabilizer" evidence="1">
    <location>
        <position position="373"/>
    </location>
</feature>
<feature type="site" description="Transition state stabilizer" evidence="1">
    <location>
        <position position="407"/>
    </location>
</feature>
<gene>
    <name evidence="1" type="primary">lacZ</name>
    <name type="ordered locus">YpsIP31758_1629</name>
</gene>
<name>BGAL_YERP3</name>